<feature type="signal peptide" evidence="3">
    <location>
        <begin position="1"/>
        <end position="19"/>
    </location>
</feature>
<feature type="chain" id="PRO_0000012947" description="Extracellular calcium-sensing receptor">
    <location>
        <begin position="20"/>
        <end position="1079"/>
    </location>
</feature>
<feature type="topological domain" description="Extracellular" evidence="1">
    <location>
        <begin position="20"/>
        <end position="610"/>
    </location>
</feature>
<feature type="transmembrane region" description="Helical; Name=1" evidence="1">
    <location>
        <begin position="611"/>
        <end position="636"/>
    </location>
</feature>
<feature type="topological domain" description="Cytoplasmic" evidence="1">
    <location>
        <begin position="637"/>
        <end position="648"/>
    </location>
</feature>
<feature type="transmembrane region" description="Helical; Name=2" evidence="1">
    <location>
        <begin position="649"/>
        <end position="668"/>
    </location>
</feature>
<feature type="topological domain" description="Extracellular" evidence="1">
    <location>
        <begin position="669"/>
        <end position="674"/>
    </location>
</feature>
<feature type="transmembrane region" description="Helical; Name=3" evidence="1">
    <location>
        <begin position="675"/>
        <end position="698"/>
    </location>
</feature>
<feature type="topological domain" description="Cytoplasmic" evidence="1">
    <location>
        <begin position="699"/>
        <end position="722"/>
    </location>
</feature>
<feature type="transmembrane region" description="Helical; Name=4" evidence="1">
    <location>
        <begin position="723"/>
        <end position="745"/>
    </location>
</feature>
<feature type="topological domain" description="Extracellular" evidence="1">
    <location>
        <begin position="746"/>
        <end position="769"/>
    </location>
</feature>
<feature type="transmembrane region" description="Helical; Name=5" evidence="1">
    <location>
        <begin position="770"/>
        <end position="789"/>
    </location>
</feature>
<feature type="topological domain" description="Cytoplasmic" evidence="1">
    <location>
        <begin position="790"/>
        <end position="805"/>
    </location>
</feature>
<feature type="transmembrane region" description="Helical; Name=6" evidence="1">
    <location>
        <begin position="806"/>
        <end position="828"/>
    </location>
</feature>
<feature type="topological domain" description="Extracellular" evidence="1">
    <location>
        <begin position="829"/>
        <end position="832"/>
    </location>
</feature>
<feature type="transmembrane region" description="Helical; Name=7" evidence="1">
    <location>
        <begin position="833"/>
        <end position="854"/>
    </location>
</feature>
<feature type="topological domain" description="Cytoplasmic" evidence="1">
    <location>
        <begin position="855"/>
        <end position="1079"/>
    </location>
</feature>
<feature type="region of interest" description="Ligand-binding 1 (LB1)" evidence="1">
    <location>
        <begin position="22"/>
        <end position="188"/>
    </location>
</feature>
<feature type="region of interest" description="Ligand-binding 2 (LB2)" evidence="1">
    <location>
        <begin position="189"/>
        <end position="324"/>
    </location>
</feature>
<feature type="region of interest" description="Cysteine-rich (CR)" evidence="1">
    <location>
        <begin position="542"/>
        <end position="612"/>
    </location>
</feature>
<feature type="region of interest" description="Intracellular loop 1 (ICL1)" evidence="1">
    <location>
        <begin position="637"/>
        <end position="648"/>
    </location>
</feature>
<feature type="region of interest" description="Intracellular loop 2 (ICL2)" evidence="1">
    <location>
        <begin position="699"/>
        <end position="722"/>
    </location>
</feature>
<feature type="region of interest" description="Intracellular loop 3 (ICL3)" evidence="1">
    <location>
        <begin position="790"/>
        <end position="805"/>
    </location>
</feature>
<feature type="region of interest" description="C-terminus" evidence="1">
    <location>
        <begin position="855"/>
        <end position="1079"/>
    </location>
</feature>
<feature type="region of interest" description="Interaction with RNF19A" evidence="1">
    <location>
        <begin position="880"/>
        <end position="900"/>
    </location>
</feature>
<feature type="region of interest" description="Arginine-rich retention motif" evidence="1">
    <location>
        <begin position="890"/>
        <end position="898"/>
    </location>
</feature>
<feature type="region of interest" description="Disordered" evidence="4">
    <location>
        <begin position="894"/>
        <end position="964"/>
    </location>
</feature>
<feature type="compositionally biased region" description="Low complexity" evidence="4">
    <location>
        <begin position="900"/>
        <end position="918"/>
    </location>
</feature>
<feature type="compositionally biased region" description="Basic and acidic residues" evidence="4">
    <location>
        <begin position="919"/>
        <end position="931"/>
    </location>
</feature>
<feature type="compositionally biased region" description="Low complexity" evidence="4">
    <location>
        <begin position="932"/>
        <end position="961"/>
    </location>
</feature>
<feature type="binding site" evidence="1">
    <location>
        <begin position="66"/>
        <end position="70"/>
    </location>
    <ligand>
        <name>phosphate</name>
        <dbReference type="ChEBI" id="CHEBI:43474"/>
        <note>required for structural stability of the receptor</note>
    </ligand>
</feature>
<feature type="binding site" evidence="1">
    <location>
        <position position="81"/>
    </location>
    <ligand>
        <name>Ca(2+)</name>
        <dbReference type="ChEBI" id="CHEBI:29108"/>
    </ligand>
</feature>
<feature type="binding site" evidence="1">
    <location>
        <position position="84"/>
    </location>
    <ligand>
        <name>Ca(2+)</name>
        <dbReference type="ChEBI" id="CHEBI:29108"/>
    </ligand>
</feature>
<feature type="binding site" evidence="1">
    <location>
        <position position="87"/>
    </location>
    <ligand>
        <name>Ca(2+)</name>
        <dbReference type="ChEBI" id="CHEBI:29108"/>
    </ligand>
</feature>
<feature type="binding site" evidence="1">
    <location>
        <position position="88"/>
    </location>
    <ligand>
        <name>Ca(2+)</name>
        <dbReference type="ChEBI" id="CHEBI:29108"/>
    </ligand>
</feature>
<feature type="binding site" evidence="1">
    <location>
        <position position="100"/>
    </location>
    <ligand>
        <name>Ca(2+)</name>
        <dbReference type="ChEBI" id="CHEBI:29108"/>
    </ligand>
</feature>
<feature type="binding site" evidence="1">
    <location>
        <position position="145"/>
    </location>
    <ligand>
        <name>Ca(2+)</name>
        <dbReference type="ChEBI" id="CHEBI:29108"/>
    </ligand>
</feature>
<feature type="binding site" evidence="1">
    <location>
        <position position="147"/>
    </location>
    <ligand>
        <name>L-tryptophan</name>
        <dbReference type="ChEBI" id="CHEBI:57912"/>
    </ligand>
</feature>
<feature type="binding site" evidence="1">
    <location>
        <position position="168"/>
    </location>
    <ligand>
        <name>L-tryptophan</name>
        <dbReference type="ChEBI" id="CHEBI:57912"/>
    </ligand>
</feature>
<feature type="binding site" evidence="1">
    <location>
        <position position="170"/>
    </location>
    <ligand>
        <name>Ca(2+)</name>
        <dbReference type="ChEBI" id="CHEBI:29108"/>
    </ligand>
</feature>
<feature type="binding site" evidence="1">
    <location>
        <position position="170"/>
    </location>
    <ligand>
        <name>L-tryptophan</name>
        <dbReference type="ChEBI" id="CHEBI:57912"/>
    </ligand>
</feature>
<feature type="binding site" evidence="1">
    <location>
        <position position="188"/>
    </location>
    <ligand>
        <name>Ca(2+)</name>
        <dbReference type="ChEBI" id="CHEBI:29108"/>
    </ligand>
</feature>
<feature type="binding site" evidence="1">
    <location>
        <position position="190"/>
    </location>
    <ligand>
        <name>Ca(2+)</name>
        <dbReference type="ChEBI" id="CHEBI:29108"/>
    </ligand>
</feature>
<feature type="binding site" evidence="1">
    <location>
        <position position="231"/>
    </location>
    <ligand>
        <name>Ca(2+)</name>
        <dbReference type="ChEBI" id="CHEBI:29108"/>
    </ligand>
</feature>
<feature type="binding site" evidence="1">
    <location>
        <position position="234"/>
    </location>
    <ligand>
        <name>Ca(2+)</name>
        <dbReference type="ChEBI" id="CHEBI:29108"/>
    </ligand>
</feature>
<feature type="binding site" evidence="1">
    <location>
        <position position="238"/>
    </location>
    <ligand>
        <name>spermine</name>
        <dbReference type="ChEBI" id="CHEBI:45725"/>
    </ligand>
</feature>
<feature type="binding site" evidence="1">
    <location>
        <position position="240"/>
    </location>
    <ligand>
        <name>spermine</name>
        <dbReference type="ChEBI" id="CHEBI:45725"/>
    </ligand>
</feature>
<feature type="binding site" evidence="1">
    <location>
        <position position="297"/>
    </location>
    <ligand>
        <name>Ca(2+)</name>
        <dbReference type="ChEBI" id="CHEBI:29108"/>
    </ligand>
</feature>
<feature type="binding site" evidence="1">
    <location>
        <position position="297"/>
    </location>
    <ligand>
        <name>L-tryptophan</name>
        <dbReference type="ChEBI" id="CHEBI:57912"/>
    </ligand>
</feature>
<feature type="binding site" evidence="1">
    <location>
        <begin position="415"/>
        <end position="417"/>
    </location>
    <ligand>
        <name>phosphate</name>
        <dbReference type="ChEBI" id="CHEBI:43474"/>
        <note>required for structural stability of the receptor</note>
    </ligand>
</feature>
<feature type="binding site" evidence="1">
    <location>
        <position position="489"/>
    </location>
    <ligand>
        <name>Ca(2+)</name>
        <dbReference type="ChEBI" id="CHEBI:29108"/>
    </ligand>
</feature>
<feature type="binding site" evidence="1">
    <location>
        <position position="557"/>
    </location>
    <ligand>
        <name>Ca(2+)</name>
        <dbReference type="ChEBI" id="CHEBI:29108"/>
    </ligand>
</feature>
<feature type="modified residue" description="Phosphothreonine" evidence="1">
    <location>
        <position position="888"/>
    </location>
</feature>
<feature type="modified residue" description="Phosphoserine" evidence="1">
    <location>
        <position position="899"/>
    </location>
</feature>
<feature type="modified residue" description="Phosphoserine" evidence="17">
    <location>
        <position position="920"/>
    </location>
</feature>
<feature type="modified residue" description="Phosphoserine" evidence="17">
    <location>
        <position position="1062"/>
    </location>
</feature>
<feature type="glycosylation site" description="N-linked (GlcNAc...) asparagine" evidence="3">
    <location>
        <position position="90"/>
    </location>
</feature>
<feature type="glycosylation site" description="N-linked (GlcNAc...) asparagine" evidence="3">
    <location>
        <position position="130"/>
    </location>
</feature>
<feature type="glycosylation site" description="N-linked (GlcNAc...) asparagine" evidence="3">
    <location>
        <position position="261"/>
    </location>
</feature>
<feature type="glycosylation site" description="N-linked (GlcNAc...) asparagine" evidence="3">
    <location>
        <position position="287"/>
    </location>
</feature>
<feature type="glycosylation site" description="N-linked (GlcNAc...) asparagine" evidence="3">
    <location>
        <position position="386"/>
    </location>
</feature>
<feature type="glycosylation site" description="N-linked (GlcNAc...) asparagine" evidence="3">
    <location>
        <position position="446"/>
    </location>
</feature>
<feature type="glycosylation site" description="N-linked (GlcNAc...) asparagine" evidence="3">
    <location>
        <position position="468"/>
    </location>
</feature>
<feature type="glycosylation site" description="N-linked (GlcNAc...) asparagine" evidence="3">
    <location>
        <position position="488"/>
    </location>
</feature>
<feature type="glycosylation site" description="N-linked (GlcNAc...) asparagine" evidence="3">
    <location>
        <position position="541"/>
    </location>
</feature>
<feature type="glycosylation site" description="N-linked (GlcNAc...) asparagine" evidence="3">
    <location>
        <position position="594"/>
    </location>
</feature>
<feature type="disulfide bond" evidence="1">
    <location>
        <begin position="60"/>
        <end position="101"/>
    </location>
</feature>
<feature type="disulfide bond" description="Interchain" evidence="1">
    <location>
        <position position="129"/>
    </location>
</feature>
<feature type="disulfide bond" description="Interchain" evidence="1">
    <location>
        <position position="131"/>
    </location>
</feature>
<feature type="disulfide bond" evidence="1">
    <location>
        <begin position="236"/>
        <end position="561"/>
    </location>
</feature>
<feature type="disulfide bond" evidence="1">
    <location>
        <begin position="358"/>
        <end position="395"/>
    </location>
</feature>
<feature type="disulfide bond" evidence="1">
    <location>
        <begin position="437"/>
        <end position="449"/>
    </location>
</feature>
<feature type="disulfide bond" evidence="1">
    <location>
        <begin position="542"/>
        <end position="562"/>
    </location>
</feature>
<feature type="disulfide bond" evidence="1">
    <location>
        <begin position="546"/>
        <end position="565"/>
    </location>
</feature>
<feature type="disulfide bond" evidence="1">
    <location>
        <begin position="568"/>
        <end position="582"/>
    </location>
</feature>
<feature type="disulfide bond" evidence="1">
    <location>
        <begin position="585"/>
        <end position="598"/>
    </location>
</feature>
<feature type="splice variant" id="VSP_002036" description="In isoform B." evidence="15">
    <location>
        <begin position="461"/>
        <end position="537"/>
    </location>
</feature>
<feature type="mutagenesis site" description="In nuclear flecks (Nuf) mutant; gain-of-function mutant; mice develop cataracts and display ectopic calcification." evidence="9">
    <original>L</original>
    <variation>Q</variation>
    <location>
        <position position="723"/>
    </location>
</feature>
<feature type="sequence conflict" description="In Ref. 2; AAD40638." evidence="15" ref="2">
    <original>A</original>
    <variation>S</variation>
    <location>
        <position position="45"/>
    </location>
</feature>
<feature type="sequence conflict" description="In Ref. 5; AAF00193." evidence="15" ref="5">
    <original>L</original>
    <variation>P</variation>
    <location>
        <position position="304"/>
    </location>
</feature>
<feature type="sequence conflict" description="In Ref. 1; AAD28371/AAD28372." evidence="15" ref="1">
    <original>D</original>
    <variation>G</variation>
    <location>
        <position position="410"/>
    </location>
</feature>
<feature type="sequence conflict" description="In Ref. 2; AAD40638." evidence="15" ref="2">
    <original>V</original>
    <variation>A</variation>
    <location>
        <position position="566"/>
    </location>
</feature>
<feature type="sequence conflict" description="In Ref. 1; AAD28371/AAD28372." evidence="15" ref="1">
    <original>H</original>
    <variation>Y</variation>
    <location>
        <position position="595"/>
    </location>
</feature>
<feature type="sequence conflict" description="In Ref. 7; BAA77688." evidence="15" ref="7">
    <original>E</original>
    <variation>V</variation>
    <location>
        <position position="610"/>
    </location>
</feature>
<feature type="sequence conflict" description="In Ref. 7; BAA77688." evidence="15" ref="7">
    <original>F</original>
    <variation>L</variation>
    <location>
        <position position="814"/>
    </location>
</feature>
<feature type="sequence conflict" description="In Ref. 2; AAD40638." evidence="15" ref="2">
    <original>L</original>
    <variation>I</variation>
    <location>
        <position position="889"/>
    </location>
</feature>
<feature type="sequence conflict" description="In Ref. 2; AAD40638." evidence="15" ref="2">
    <original>TGS</original>
    <variation>SGW</variation>
    <location>
        <begin position="906"/>
        <end position="908"/>
    </location>
</feature>
<feature type="sequence conflict" description="In Ref. 1; AAD28371/AAD28372." evidence="15" ref="1">
    <original>I</original>
    <variation>N</variation>
    <location>
        <position position="909"/>
    </location>
</feature>
<feature type="sequence conflict" description="In Ref. 1; AAD28371/AAD28372." evidence="15" ref="1">
    <original>M</original>
    <variation>V</variation>
    <location>
        <position position="1057"/>
    </location>
</feature>
<feature type="sequence conflict" description="In Ref. 2; AAD40638." evidence="15" ref="2">
    <original>V</original>
    <variation>A</variation>
    <location>
        <position position="1064"/>
    </location>
</feature>
<feature type="sequence conflict" description="In Ref. 2; AAD40638." evidence="15" ref="2">
    <original>I</original>
    <variation>V</variation>
    <location>
        <position position="1076"/>
    </location>
</feature>
<protein>
    <recommendedName>
        <fullName evidence="14">Extracellular calcium-sensing receptor</fullName>
        <shortName evidence="14">CaSR</shortName>
    </recommendedName>
    <alternativeName>
        <fullName>Parathyroid cell calcium-sensing receptor</fullName>
        <shortName>PCaR1</shortName>
    </alternativeName>
</protein>
<keyword id="KW-0025">Alternative splicing</keyword>
<keyword id="KW-0106">Calcium</keyword>
<keyword id="KW-1003">Cell membrane</keyword>
<keyword id="KW-1015">Disulfide bond</keyword>
<keyword id="KW-0297">G-protein coupled receptor</keyword>
<keyword id="KW-0325">Glycoprotein</keyword>
<keyword id="KW-0472">Membrane</keyword>
<keyword id="KW-0479">Metal-binding</keyword>
<keyword id="KW-0597">Phosphoprotein</keyword>
<keyword id="KW-0675">Receptor</keyword>
<keyword id="KW-1185">Reference proteome</keyword>
<keyword id="KW-0732">Signal</keyword>
<keyword id="KW-0807">Transducer</keyword>
<keyword id="KW-0812">Transmembrane</keyword>
<keyword id="KW-1133">Transmembrane helix</keyword>
<keyword id="KW-0832">Ubl conjugation</keyword>
<accession>Q9QY96</accession>
<accession>G3UX06</accession>
<accession>O08968</accession>
<accession>O88519</accession>
<accession>Q9QY95</accession>
<accession>Q9QZU8</accession>
<accession>Q9R1D6</accession>
<accession>Q9R1Y2</accession>
<reference key="1">
    <citation type="journal article" date="2000" name="J. Biol. Chem.">
        <title>The calcium sensing receptor and its alternatively spliced form in murine epidermal differentiation.</title>
        <authorList>
            <person name="Oda Y."/>
            <person name="Tu C.-L."/>
            <person name="Chang W."/>
            <person name="Crumrine D."/>
            <person name="Koemueves L."/>
            <person name="Mauro T."/>
            <person name="Elias P.M."/>
            <person name="Bikle D.D."/>
        </authorList>
    </citation>
    <scope>NUCLEOTIDE SEQUENCE [MRNA]</scope>
    <scope>ALTERNATIVE SPLICING</scope>
    <scope>TISSUE SPECIFICITY</scope>
    <source>
        <strain>C57BL/6J</strain>
        <tissue>Kidney</tissue>
    </source>
</reference>
<reference key="2">
    <citation type="journal article" date="2000" name="J. Biol. Chem.">
        <title>Sensing of extracellular cations in CasR-deficient osteoblasts. Evidence for a novel cation-sensing mechanism.</title>
        <authorList>
            <person name="Pi M."/>
            <person name="Garner S.C."/>
            <person name="Flannery P."/>
            <person name="Spurney R.F."/>
            <person name="Quarles L.D."/>
        </authorList>
    </citation>
    <scope>NUCLEOTIDE SEQUENCE [MRNA] (ISOFORM A)</scope>
    <scope>TISSUE SPECIFICITY</scope>
    <source>
        <tissue>Kidney</tissue>
    </source>
</reference>
<reference key="3">
    <citation type="journal article" date="2009" name="PLoS Biol.">
        <title>Lineage-specific biology revealed by a finished genome assembly of the mouse.</title>
        <authorList>
            <person name="Church D.M."/>
            <person name="Goodstadt L."/>
            <person name="Hillier L.W."/>
            <person name="Zody M.C."/>
            <person name="Goldstein S."/>
            <person name="She X."/>
            <person name="Bult C.J."/>
            <person name="Agarwala R."/>
            <person name="Cherry J.L."/>
            <person name="DiCuccio M."/>
            <person name="Hlavina W."/>
            <person name="Kapustin Y."/>
            <person name="Meric P."/>
            <person name="Maglott D."/>
            <person name="Birtle Z."/>
            <person name="Marques A.C."/>
            <person name="Graves T."/>
            <person name="Zhou S."/>
            <person name="Teague B."/>
            <person name="Potamousis K."/>
            <person name="Churas C."/>
            <person name="Place M."/>
            <person name="Herschleb J."/>
            <person name="Runnheim R."/>
            <person name="Forrest D."/>
            <person name="Amos-Landgraf J."/>
            <person name="Schwartz D.C."/>
            <person name="Cheng Z."/>
            <person name="Lindblad-Toh K."/>
            <person name="Eichler E.E."/>
            <person name="Ponting C.P."/>
        </authorList>
    </citation>
    <scope>NUCLEOTIDE SEQUENCE [LARGE SCALE GENOMIC DNA]</scope>
    <source>
        <strain>C57BL/6J</strain>
    </source>
</reference>
<reference key="4">
    <citation type="submission" date="2005-07" db="EMBL/GenBank/DDBJ databases">
        <authorList>
            <person name="Mural R.J."/>
            <person name="Adams M.D."/>
            <person name="Myers E.W."/>
            <person name="Smith H.O."/>
            <person name="Venter J.C."/>
        </authorList>
    </citation>
    <scope>NUCLEOTIDE SEQUENCE [LARGE SCALE GENOMIC DNA]</scope>
</reference>
<reference key="5">
    <citation type="journal article" date="1999" name="Endocrinology">
        <title>Expression and signal transduction of calcium-sensing receptors in cartilage and bone.</title>
        <authorList>
            <person name="Chang W."/>
            <person name="Tu C."/>
            <person name="Chen T.-H."/>
            <person name="Komuves L."/>
            <person name="Oda Y."/>
            <person name="Pratt S.A."/>
            <person name="Miller S."/>
            <person name="Shoback D."/>
        </authorList>
    </citation>
    <scope>NUCLEOTIDE SEQUENCE [GENOMIC DNA] OF 256-600 (ISOFORM A)</scope>
    <scope>TISSUE SPECIFICITY</scope>
    <source>
        <tissue>Epiphyseal cartilage</tissue>
    </source>
</reference>
<reference key="6">
    <citation type="submission" date="1998-05" db="EMBL/GenBank/DDBJ databases">
        <authorList>
            <person name="Hildenbrand J."/>
            <person name="Ammon H.P.T."/>
            <person name="Wahl M.A."/>
        </authorList>
    </citation>
    <scope>NUCLEOTIDE SEQUENCE [MRNA] OF 507-582 (ISOFORM A)</scope>
    <source>
        <strain>NMRI</strain>
        <tissue>Brain</tissue>
    </source>
</reference>
<reference key="7">
    <citation type="submission" date="1999-05" db="EMBL/GenBank/DDBJ databases">
        <authorList>
            <person name="Moawad T.I."/>
            <person name="Riccardi D."/>
        </authorList>
    </citation>
    <scope>NUCLEOTIDE SEQUENCE [MRNA] OF 562-814</scope>
    <source>
        <tissue>Kidney</tissue>
    </source>
</reference>
<reference key="8">
    <citation type="journal article" date="1997" name="J. Bone Miner. Res.">
        <title>A distinct cation-sensing mechanism in MC3T3-E1 osteoblasts functionally related to the calcium receptor.</title>
        <authorList>
            <person name="Quarles L.D."/>
            <person name="Hartle J.E. II"/>
            <person name="Siddhanti S.R."/>
            <person name="Guo R."/>
            <person name="Hinson T.K."/>
        </authorList>
    </citation>
    <scope>NUCLEOTIDE SEQUENCE [GENOMIC DNA] OF 646-799</scope>
    <scope>TISSUE SPECIFICITY</scope>
</reference>
<reference key="9">
    <citation type="journal article" date="1995" name="Nat. Genet.">
        <title>A mouse model of human familial hypocalciuric hypercalcemia and neonatal severe hyperparathyroidism.</title>
        <authorList>
            <person name="Ho C."/>
            <person name="Conner D.A."/>
            <person name="Pollak M.R."/>
            <person name="Ladd D.J."/>
            <person name="Kifor O."/>
            <person name="Warren H.B."/>
            <person name="Brown E.M."/>
            <person name="Seidman J.G."/>
            <person name="Seidman C.E."/>
        </authorList>
    </citation>
    <scope>FUNCTION</scope>
    <scope>DISRUPTION PHENOTYPE</scope>
</reference>
<reference key="10">
    <citation type="journal article" date="2003" name="J. Clin. Invest.">
        <title>The calcium-sensing receptor is required for normal calcium homeostasis independent of parathyroid hormone.</title>
        <authorList>
            <person name="Kos C.H."/>
            <person name="Karaplis A.C."/>
            <person name="Peng J.B."/>
            <person name="Hediger M.A."/>
            <person name="Goltzman D."/>
            <person name="Mohammad K.S."/>
            <person name="Guise T.A."/>
            <person name="Pollak M.R."/>
        </authorList>
    </citation>
    <scope>FUNCTION</scope>
    <scope>DISRUPTION PHENOTYPE</scope>
</reference>
<reference key="11">
    <citation type="journal article" date="2004" name="Proc. Natl. Acad. Sci. U.S.A.">
        <title>Activating calcium-sensing receptor mutation in the mouse is associated with cataracts and ectopic calcification.</title>
        <authorList>
            <person name="Hough T.A."/>
            <person name="Bogani D."/>
            <person name="Cheeseman M.T."/>
            <person name="Favor J."/>
            <person name="Nesbit M.A."/>
            <person name="Thakker R.V."/>
            <person name="Lyon M.F."/>
        </authorList>
    </citation>
    <scope>SUBCELLULAR LOCATION</scope>
    <scope>MUTAGENESIS OF LEU-723</scope>
</reference>
<reference key="12">
    <citation type="journal article" date="2010" name="Cell">
        <title>A tissue-specific atlas of mouse protein phosphorylation and expression.</title>
        <authorList>
            <person name="Huttlin E.L."/>
            <person name="Jedrychowski M.P."/>
            <person name="Elias J.E."/>
            <person name="Goswami T."/>
            <person name="Rad R."/>
            <person name="Beausoleil S.A."/>
            <person name="Villen J."/>
            <person name="Haas W."/>
            <person name="Sowa M.E."/>
            <person name="Gygi S.P."/>
        </authorList>
    </citation>
    <scope>PHOSPHORYLATION [LARGE SCALE ANALYSIS] AT SER-920 AND SER-1062</scope>
    <scope>IDENTIFICATION BY MASS SPECTROMETRY [LARGE SCALE ANALYSIS]</scope>
    <source>
        <tissue>Kidney</tissue>
    </source>
</reference>
<reference key="13">
    <citation type="journal article" date="2012" name="Nature">
        <title>The calcium-sensing receptor regulates the NLRP3 inflammasome through Ca2+ and cAMP.</title>
        <authorList>
            <person name="Lee G.S."/>
            <person name="Subramanian N."/>
            <person name="Kim A.I."/>
            <person name="Aksentijevich I."/>
            <person name="Goldbach-Mansky R."/>
            <person name="Sacks D.B."/>
            <person name="Germain R.N."/>
            <person name="Kastner D.L."/>
            <person name="Chae J.J."/>
        </authorList>
    </citation>
    <scope>FUNCTION</scope>
</reference>
<reference key="14">
    <citation type="journal article" date="2015" name="Proc. Natl. Acad. Sci. U.S.A.">
        <title>Reciprocal regulation of two G protein-coupled receptors sensing extracellular concentrations of Ca2+ and H.</title>
        <authorList>
            <person name="Wei W.C."/>
            <person name="Jacobs B."/>
            <person name="Becker E.B."/>
            <person name="Glitsch M.D."/>
        </authorList>
    </citation>
    <scope>FUNCTION</scope>
    <scope>SUBCELLULAR LOCATION</scope>
</reference>
<name>CASR_MOUSE</name>
<sequence length="1079" mass="120903">MAWFGYCLALLALTWHSSAYGPDQRAQKKGDIILGGLFPIHFGVAAKDQDLKSRPESVECIRYNFRGFRWLQAMIFAIEEINSSPALLPNMTLGYRIFDTCNTVSKALEATLSFVAQNKIDSLNLDEFCNCSEHIPSTIAVVGATGSGVSTAVANLLGLFYIPQVSYASSSRLLSNKNQFKSFLRTIPNDEHQATAMADIIEYFRWNWVGTIAADDDYGRPGIEKFREEAEERDICIDFSELISQYSDEEEIQQVVEVIQNSTAKVIVVFSSGPDLEPLIKEIVRRNITGRIWLASEAWASSSLIAMPEYFHVVGGTIGFGLKAGQIPGFREFLQKVHPRKSVHNGFAKEFWEETFNCHLQDGAKGPLPVDTFVRSHEEGGNRLLNSSTAFRPLCTGDENINSVETPYMDYEHLRISYNVYLAVYSIAHALQDIYTCLPGRGLFTNGSCADIKKVEAWQVLKHLRHLNFTNNMGEQVTFDECGDLVGNYSIINWHLSPEDGSIVFKEVGYYNVYAKKGERLFINEGKILWSGFSREVPFSNCSRDCQAGTRKGIIEGEPTCCFECVECPDGEYSGETDASACDKCPDDFWSNENHTSCIAKEIEFLAWTEPFGIALTLFAVLGIFLTAFVLGVFIKFRNTPIVKATNRELSYLLLFSLLCCFSSSLFFIGEPQDWTCRLRQPAFGISFVLCISCILVKTNRVLLVFEAKIPTSFHRKWWGLNLQFLLVFLCTFMQIVICIIWLYTAPPSSYRNHELEDEIIFITCHEGSLMALGSLIGYTCLLAAICFFFAFKSRKLPENFNEAKFITFSMLIFFIVWISFIPAYASTYGKFVSAVEVIAILAASFGLLACIFFNKVYIILFKPSRNTIEEVRSSTAAHAFKVAARATLRRPNISRKRSSSLGGSTGSIPSSSISSKSNSEDRFPQPERQKQQQPLALTQQEQQQQPLTLQPQQQQQPQQPRCKQKVIFGSGTVTFSLSFDEPQKNAMAHRNSMRQNSLEAQKSNDTLNRHQALLPLQCAEADSEMTIQETGLQGPMVGDHQPEIESPDEMSPALVMSTSRSFVISGGGSSVTENILHS</sequence>
<evidence type="ECO:0000250" key="1">
    <source>
        <dbReference type="UniProtKB" id="P41180"/>
    </source>
</evidence>
<evidence type="ECO:0000250" key="2">
    <source>
        <dbReference type="UniProtKB" id="P48442"/>
    </source>
</evidence>
<evidence type="ECO:0000255" key="3"/>
<evidence type="ECO:0000256" key="4">
    <source>
        <dbReference type="SAM" id="MobiDB-lite"/>
    </source>
</evidence>
<evidence type="ECO:0000269" key="5">
    <source>
    </source>
</evidence>
<evidence type="ECO:0000269" key="6">
    <source>
    </source>
</evidence>
<evidence type="ECO:0000269" key="7">
    <source>
    </source>
</evidence>
<evidence type="ECO:0000269" key="8">
    <source>
    </source>
</evidence>
<evidence type="ECO:0000269" key="9">
    <source>
    </source>
</evidence>
<evidence type="ECO:0000269" key="10">
    <source>
    </source>
</evidence>
<evidence type="ECO:0000269" key="11">
    <source>
    </source>
</evidence>
<evidence type="ECO:0000269" key="12">
    <source>
    </source>
</evidence>
<evidence type="ECO:0000269" key="13">
    <source>
    </source>
</evidence>
<evidence type="ECO:0000303" key="14">
    <source>
    </source>
</evidence>
<evidence type="ECO:0000305" key="15"/>
<evidence type="ECO:0000312" key="16">
    <source>
        <dbReference type="MGI" id="MGI:1351351"/>
    </source>
</evidence>
<evidence type="ECO:0007744" key="17">
    <source>
    </source>
</evidence>
<dbReference type="EMBL" id="AF110178">
    <property type="protein sequence ID" value="AAD28371.1"/>
    <property type="molecule type" value="mRNA"/>
</dbReference>
<dbReference type="EMBL" id="AF110179">
    <property type="protein sequence ID" value="AAD28372.1"/>
    <property type="molecule type" value="mRNA"/>
</dbReference>
<dbReference type="EMBL" id="AF128842">
    <property type="protein sequence ID" value="AAD40638.1"/>
    <property type="molecule type" value="mRNA"/>
</dbReference>
<dbReference type="EMBL" id="AC074229">
    <property type="status" value="NOT_ANNOTATED_CDS"/>
    <property type="molecule type" value="Genomic_DNA"/>
</dbReference>
<dbReference type="EMBL" id="CH466521">
    <property type="protein sequence ID" value="EDK97924.1"/>
    <property type="molecule type" value="Genomic_DNA"/>
</dbReference>
<dbReference type="EMBL" id="AF068900">
    <property type="protein sequence ID" value="AAC19388.1"/>
    <property type="molecule type" value="mRNA"/>
</dbReference>
<dbReference type="EMBL" id="AB027140">
    <property type="protein sequence ID" value="BAA77688.1"/>
    <property type="molecule type" value="mRNA"/>
</dbReference>
<dbReference type="EMBL" id="AF002015">
    <property type="protein sequence ID" value="AAC53252.1"/>
    <property type="molecule type" value="Genomic_DNA"/>
</dbReference>
<dbReference type="EMBL" id="AF159565">
    <property type="protein sequence ID" value="AAF00193.1"/>
    <property type="molecule type" value="mRNA"/>
</dbReference>
<dbReference type="CCDS" id="CCDS28154.1">
    <molecule id="Q9QY96-1"/>
</dbReference>
<dbReference type="RefSeq" id="NP_038831.2">
    <molecule id="Q9QY96-1"/>
    <property type="nucleotide sequence ID" value="NM_013803.3"/>
</dbReference>
<dbReference type="RefSeq" id="XP_006521792.1">
    <molecule id="Q9QY96-1"/>
    <property type="nucleotide sequence ID" value="XM_006521729.3"/>
</dbReference>
<dbReference type="RefSeq" id="XP_006521793.1">
    <molecule id="Q9QY96-1"/>
    <property type="nucleotide sequence ID" value="XM_006521730.3"/>
</dbReference>
<dbReference type="RefSeq" id="XP_006521794.1">
    <molecule id="Q9QY96-1"/>
    <property type="nucleotide sequence ID" value="XM_006521731.5"/>
</dbReference>
<dbReference type="RefSeq" id="XP_006521795.1">
    <molecule id="Q9QY96-1"/>
    <property type="nucleotide sequence ID" value="XM_006521732.3"/>
</dbReference>
<dbReference type="RefSeq" id="XP_036015650.1">
    <molecule id="Q9QY96-1"/>
    <property type="nucleotide sequence ID" value="XM_036159757.1"/>
</dbReference>
<dbReference type="SMR" id="Q9QY96"/>
<dbReference type="BioGRID" id="198504">
    <property type="interactions" value="1"/>
</dbReference>
<dbReference type="FunCoup" id="Q9QY96">
    <property type="interactions" value="340"/>
</dbReference>
<dbReference type="STRING" id="10090.ENSMUSP00000069080"/>
<dbReference type="BindingDB" id="Q9QY96"/>
<dbReference type="ChEMBL" id="CHEMBL4105868"/>
<dbReference type="GuidetoPHARMACOLOGY" id="54"/>
<dbReference type="GlyCosmos" id="Q9QY96">
    <property type="glycosylation" value="10 sites, No reported glycans"/>
</dbReference>
<dbReference type="GlyGen" id="Q9QY96">
    <property type="glycosylation" value="10 sites, 2 N-linked glycans (3 sites)"/>
</dbReference>
<dbReference type="iPTMnet" id="Q9QY96"/>
<dbReference type="PhosphoSitePlus" id="Q9QY96"/>
<dbReference type="PaxDb" id="10090-ENSMUSP00000069080"/>
<dbReference type="ProteomicsDB" id="281219">
    <molecule id="Q9QY96-1"/>
</dbReference>
<dbReference type="ProteomicsDB" id="281220">
    <molecule id="Q9QY96-2"/>
</dbReference>
<dbReference type="Antibodypedia" id="16753">
    <property type="antibodies" value="691 antibodies from 43 providers"/>
</dbReference>
<dbReference type="DNASU" id="12374"/>
<dbReference type="Ensembl" id="ENSMUST00000063597.14">
    <molecule id="Q9QY96-1"/>
    <property type="protein sequence ID" value="ENSMUSP00000069080.8"/>
    <property type="gene ID" value="ENSMUSG00000051980.14"/>
</dbReference>
<dbReference type="Ensembl" id="ENSMUST00000114847.9">
    <molecule id="Q9QY96-2"/>
    <property type="protein sequence ID" value="ENSMUSP00000110496.3"/>
    <property type="gene ID" value="ENSMUSG00000051980.14"/>
</dbReference>
<dbReference type="Ensembl" id="ENSMUST00000172826.2">
    <molecule id="Q9QY96-1"/>
    <property type="protein sequence ID" value="ENSMUSP00000133500.2"/>
    <property type="gene ID" value="ENSMUSG00000051980.14"/>
</dbReference>
<dbReference type="GeneID" id="12374"/>
<dbReference type="KEGG" id="mmu:12374"/>
<dbReference type="UCSC" id="uc007zcp.1">
    <molecule id="Q9QY96-1"/>
    <property type="organism name" value="mouse"/>
</dbReference>
<dbReference type="UCSC" id="uc012afg.1">
    <molecule id="Q9QY96-2"/>
    <property type="organism name" value="mouse"/>
</dbReference>
<dbReference type="AGR" id="MGI:1351351"/>
<dbReference type="CTD" id="846"/>
<dbReference type="MGI" id="MGI:1351351">
    <property type="gene designation" value="Casr"/>
</dbReference>
<dbReference type="VEuPathDB" id="HostDB:ENSMUSG00000051980"/>
<dbReference type="eggNOG" id="KOG1056">
    <property type="taxonomic scope" value="Eukaryota"/>
</dbReference>
<dbReference type="GeneTree" id="ENSGT00940000157596"/>
<dbReference type="HOGENOM" id="CLU_005389_1_1_1"/>
<dbReference type="InParanoid" id="Q9QY96"/>
<dbReference type="OMA" id="KCPDDSW"/>
<dbReference type="OrthoDB" id="5984008at2759"/>
<dbReference type="PhylomeDB" id="Q9QY96"/>
<dbReference type="TreeFam" id="TF331269"/>
<dbReference type="Reactome" id="R-MMU-416476">
    <property type="pathway name" value="G alpha (q) signalling events"/>
</dbReference>
<dbReference type="Reactome" id="R-MMU-418594">
    <property type="pathway name" value="G alpha (i) signalling events"/>
</dbReference>
<dbReference type="Reactome" id="R-MMU-420499">
    <property type="pathway name" value="Class C/3 (Metabotropic glutamate/pheromone receptors)"/>
</dbReference>
<dbReference type="BioGRID-ORCS" id="12374">
    <property type="hits" value="2 hits in 76 CRISPR screens"/>
</dbReference>
<dbReference type="ChiTaRS" id="Casr">
    <property type="organism name" value="mouse"/>
</dbReference>
<dbReference type="PRO" id="PR:Q9QY96"/>
<dbReference type="Proteomes" id="UP000000589">
    <property type="component" value="Chromosome 16"/>
</dbReference>
<dbReference type="RNAct" id="Q9QY96">
    <property type="molecule type" value="protein"/>
</dbReference>
<dbReference type="Bgee" id="ENSMUSG00000051980">
    <property type="expression patterns" value="Expressed in hindlimb stylopod muscle and 65 other cell types or tissues"/>
</dbReference>
<dbReference type="GO" id="GO:0016324">
    <property type="term" value="C:apical plasma membrane"/>
    <property type="evidence" value="ECO:0007669"/>
    <property type="project" value="Ensembl"/>
</dbReference>
<dbReference type="GO" id="GO:0043679">
    <property type="term" value="C:axon terminus"/>
    <property type="evidence" value="ECO:0007669"/>
    <property type="project" value="Ensembl"/>
</dbReference>
<dbReference type="GO" id="GO:0016323">
    <property type="term" value="C:basolateral plasma membrane"/>
    <property type="evidence" value="ECO:0007669"/>
    <property type="project" value="Ensembl"/>
</dbReference>
<dbReference type="GO" id="GO:0009986">
    <property type="term" value="C:cell surface"/>
    <property type="evidence" value="ECO:0007669"/>
    <property type="project" value="Ensembl"/>
</dbReference>
<dbReference type="GO" id="GO:0098978">
    <property type="term" value="C:glutamatergic synapse"/>
    <property type="evidence" value="ECO:0000314"/>
    <property type="project" value="SynGO"/>
</dbReference>
<dbReference type="GO" id="GO:0043025">
    <property type="term" value="C:neuronal cell body"/>
    <property type="evidence" value="ECO:0007669"/>
    <property type="project" value="Ensembl"/>
</dbReference>
<dbReference type="GO" id="GO:0005886">
    <property type="term" value="C:plasma membrane"/>
    <property type="evidence" value="ECO:0000250"/>
    <property type="project" value="UniProtKB"/>
</dbReference>
<dbReference type="GO" id="GO:0042734">
    <property type="term" value="C:presynaptic membrane"/>
    <property type="evidence" value="ECO:0007669"/>
    <property type="project" value="Ensembl"/>
</dbReference>
<dbReference type="GO" id="GO:0016597">
    <property type="term" value="F:amino acid binding"/>
    <property type="evidence" value="ECO:0000250"/>
    <property type="project" value="UniProtKB"/>
</dbReference>
<dbReference type="GO" id="GO:0005509">
    <property type="term" value="F:calcium ion binding"/>
    <property type="evidence" value="ECO:0000250"/>
    <property type="project" value="UniProtKB"/>
</dbReference>
<dbReference type="GO" id="GO:0004930">
    <property type="term" value="F:G protein-coupled receptor activity"/>
    <property type="evidence" value="ECO:0000250"/>
    <property type="project" value="UniProtKB"/>
</dbReference>
<dbReference type="GO" id="GO:0005178">
    <property type="term" value="F:integrin binding"/>
    <property type="evidence" value="ECO:0007669"/>
    <property type="project" value="Ensembl"/>
</dbReference>
<dbReference type="GO" id="GO:0042803">
    <property type="term" value="F:protein homodimerization activity"/>
    <property type="evidence" value="ECO:0000250"/>
    <property type="project" value="UniProtKB"/>
</dbReference>
<dbReference type="GO" id="GO:0019901">
    <property type="term" value="F:protein kinase binding"/>
    <property type="evidence" value="ECO:0007669"/>
    <property type="project" value="Ensembl"/>
</dbReference>
<dbReference type="GO" id="GO:0044325">
    <property type="term" value="F:transmembrane transporter binding"/>
    <property type="evidence" value="ECO:0007669"/>
    <property type="project" value="Ensembl"/>
</dbReference>
<dbReference type="GO" id="GO:0007193">
    <property type="term" value="P:adenylate cyclase-inhibiting G protein-coupled receptor signaling pathway"/>
    <property type="evidence" value="ECO:0007669"/>
    <property type="project" value="Ensembl"/>
</dbReference>
<dbReference type="GO" id="GO:0032782">
    <property type="term" value="P:bile acid secretion"/>
    <property type="evidence" value="ECO:0007669"/>
    <property type="project" value="Ensembl"/>
</dbReference>
<dbReference type="GO" id="GO:0048754">
    <property type="term" value="P:branching morphogenesis of an epithelial tube"/>
    <property type="evidence" value="ECO:0007669"/>
    <property type="project" value="Ensembl"/>
</dbReference>
<dbReference type="GO" id="GO:0070509">
    <property type="term" value="P:calcium ion import"/>
    <property type="evidence" value="ECO:0007669"/>
    <property type="project" value="Ensembl"/>
</dbReference>
<dbReference type="GO" id="GO:0071333">
    <property type="term" value="P:cellular response to glucose stimulus"/>
    <property type="evidence" value="ECO:0007669"/>
    <property type="project" value="Ensembl"/>
</dbReference>
<dbReference type="GO" id="GO:0035729">
    <property type="term" value="P:cellular response to hepatocyte growth factor stimulus"/>
    <property type="evidence" value="ECO:0007669"/>
    <property type="project" value="Ensembl"/>
</dbReference>
<dbReference type="GO" id="GO:0071456">
    <property type="term" value="P:cellular response to hypoxia"/>
    <property type="evidence" value="ECO:0007669"/>
    <property type="project" value="Ensembl"/>
</dbReference>
<dbReference type="GO" id="GO:0071404">
    <property type="term" value="P:cellular response to low-density lipoprotein particle stimulus"/>
    <property type="evidence" value="ECO:0007669"/>
    <property type="project" value="Ensembl"/>
</dbReference>
<dbReference type="GO" id="GO:1901653">
    <property type="term" value="P:cellular response to peptide"/>
    <property type="evidence" value="ECO:0007669"/>
    <property type="project" value="Ensembl"/>
</dbReference>
<dbReference type="GO" id="GO:0071305">
    <property type="term" value="P:cellular response to vitamin D"/>
    <property type="evidence" value="ECO:0007669"/>
    <property type="project" value="Ensembl"/>
</dbReference>
<dbReference type="GO" id="GO:1902476">
    <property type="term" value="P:chloride transmembrane transport"/>
    <property type="evidence" value="ECO:0007669"/>
    <property type="project" value="Ensembl"/>
</dbReference>
<dbReference type="GO" id="GO:0005513">
    <property type="term" value="P:detection of calcium ion"/>
    <property type="evidence" value="ECO:0000250"/>
    <property type="project" value="UniProtKB"/>
</dbReference>
<dbReference type="GO" id="GO:0060613">
    <property type="term" value="P:fat pad development"/>
    <property type="evidence" value="ECO:0007669"/>
    <property type="project" value="Ensembl"/>
</dbReference>
<dbReference type="GO" id="GO:0007186">
    <property type="term" value="P:G protein-coupled receptor signaling pathway"/>
    <property type="evidence" value="ECO:0000250"/>
    <property type="project" value="UniProtKB"/>
</dbReference>
<dbReference type="GO" id="GO:0006874">
    <property type="term" value="P:intracellular calcium ion homeostasis"/>
    <property type="evidence" value="ECO:0000250"/>
    <property type="project" value="UniProtKB"/>
</dbReference>
<dbReference type="GO" id="GO:0007254">
    <property type="term" value="P:JNK cascade"/>
    <property type="evidence" value="ECO:0007669"/>
    <property type="project" value="Ensembl"/>
</dbReference>
<dbReference type="GO" id="GO:0001503">
    <property type="term" value="P:ossification"/>
    <property type="evidence" value="ECO:0007669"/>
    <property type="project" value="Ensembl"/>
</dbReference>
<dbReference type="GO" id="GO:0007200">
    <property type="term" value="P:phospholipase C-activating G protein-coupled receptor signaling pathway"/>
    <property type="evidence" value="ECO:0007669"/>
    <property type="project" value="Ensembl"/>
</dbReference>
<dbReference type="GO" id="GO:0090280">
    <property type="term" value="P:positive regulation of calcium ion import"/>
    <property type="evidence" value="ECO:0007669"/>
    <property type="project" value="Ensembl"/>
</dbReference>
<dbReference type="GO" id="GO:0008284">
    <property type="term" value="P:positive regulation of cell population proliferation"/>
    <property type="evidence" value="ECO:0007669"/>
    <property type="project" value="Ensembl"/>
</dbReference>
<dbReference type="GO" id="GO:0070374">
    <property type="term" value="P:positive regulation of ERK1 and ERK2 cascade"/>
    <property type="evidence" value="ECO:0007669"/>
    <property type="project" value="Ensembl"/>
</dbReference>
<dbReference type="GO" id="GO:0010628">
    <property type="term" value="P:positive regulation of gene expression"/>
    <property type="evidence" value="ECO:0000314"/>
    <property type="project" value="MGI"/>
</dbReference>
<dbReference type="GO" id="GO:0032024">
    <property type="term" value="P:positive regulation of insulin secretion"/>
    <property type="evidence" value="ECO:0007669"/>
    <property type="project" value="Ensembl"/>
</dbReference>
<dbReference type="GO" id="GO:0050927">
    <property type="term" value="P:positive regulation of positive chemotaxis"/>
    <property type="evidence" value="ECO:0007669"/>
    <property type="project" value="Ensembl"/>
</dbReference>
<dbReference type="GO" id="GO:0045907">
    <property type="term" value="P:positive regulation of vasoconstriction"/>
    <property type="evidence" value="ECO:0007669"/>
    <property type="project" value="Ensembl"/>
</dbReference>
<dbReference type="GO" id="GO:0051924">
    <property type="term" value="P:regulation of calcium ion transport"/>
    <property type="evidence" value="ECO:0000314"/>
    <property type="project" value="MGI"/>
</dbReference>
<dbReference type="GO" id="GO:0099505">
    <property type="term" value="P:regulation of presynaptic membrane potential"/>
    <property type="evidence" value="ECO:0000314"/>
    <property type="project" value="SynGO"/>
</dbReference>
<dbReference type="GO" id="GO:0071774">
    <property type="term" value="P:response to fibroblast growth factor"/>
    <property type="evidence" value="ECO:0007669"/>
    <property type="project" value="Ensembl"/>
</dbReference>
<dbReference type="GO" id="GO:0002931">
    <property type="term" value="P:response to ischemia"/>
    <property type="evidence" value="ECO:0007669"/>
    <property type="project" value="Ensembl"/>
</dbReference>
<dbReference type="GO" id="GO:0042311">
    <property type="term" value="P:vasodilation"/>
    <property type="evidence" value="ECO:0007669"/>
    <property type="project" value="Ensembl"/>
</dbReference>
<dbReference type="CDD" id="cd15282">
    <property type="entry name" value="7tmC_CaSR"/>
    <property type="match status" value="1"/>
</dbReference>
<dbReference type="CDD" id="cd06364">
    <property type="entry name" value="PBP1_CaSR"/>
    <property type="match status" value="1"/>
</dbReference>
<dbReference type="FunFam" id="3.40.50.2300:FF:000016">
    <property type="entry name" value="Taste 1 receptor member 2"/>
    <property type="match status" value="1"/>
</dbReference>
<dbReference type="FunFam" id="2.10.50.30:FF:000002">
    <property type="entry name" value="Vomeronasal 2 receptor, h1"/>
    <property type="match status" value="1"/>
</dbReference>
<dbReference type="FunFam" id="3.40.50.2300:FF:000388">
    <property type="entry name" value="Vomeronasal 2, receptor 23"/>
    <property type="match status" value="1"/>
</dbReference>
<dbReference type="Gene3D" id="3.40.50.2300">
    <property type="match status" value="2"/>
</dbReference>
<dbReference type="Gene3D" id="2.10.50.30">
    <property type="entry name" value="GPCR, family 3, nine cysteines domain"/>
    <property type="match status" value="1"/>
</dbReference>
<dbReference type="InterPro" id="IPR001828">
    <property type="entry name" value="ANF_lig-bd_rcpt"/>
</dbReference>
<dbReference type="InterPro" id="IPR000337">
    <property type="entry name" value="GPCR_3"/>
</dbReference>
<dbReference type="InterPro" id="IPR011500">
    <property type="entry name" value="GPCR_3_9-Cys_dom"/>
</dbReference>
<dbReference type="InterPro" id="IPR038550">
    <property type="entry name" value="GPCR_3_9-Cys_sf"/>
</dbReference>
<dbReference type="InterPro" id="IPR017978">
    <property type="entry name" value="GPCR_3_C"/>
</dbReference>
<dbReference type="InterPro" id="IPR000068">
    <property type="entry name" value="GPCR_3_Ca_sens_rcpt-rel"/>
</dbReference>
<dbReference type="InterPro" id="IPR017979">
    <property type="entry name" value="GPCR_3_CS"/>
</dbReference>
<dbReference type="InterPro" id="IPR028082">
    <property type="entry name" value="Peripla_BP_I"/>
</dbReference>
<dbReference type="PANTHER" id="PTHR24061">
    <property type="entry name" value="CALCIUM-SENSING RECEPTOR-RELATED"/>
    <property type="match status" value="1"/>
</dbReference>
<dbReference type="PANTHER" id="PTHR24061:SF358">
    <property type="entry name" value="EXTRACELLULAR CALCIUM-SENSING RECEPTOR"/>
    <property type="match status" value="1"/>
</dbReference>
<dbReference type="Pfam" id="PF00003">
    <property type="entry name" value="7tm_3"/>
    <property type="match status" value="1"/>
</dbReference>
<dbReference type="Pfam" id="PF01094">
    <property type="entry name" value="ANF_receptor"/>
    <property type="match status" value="1"/>
</dbReference>
<dbReference type="Pfam" id="PF07562">
    <property type="entry name" value="NCD3G"/>
    <property type="match status" value="1"/>
</dbReference>
<dbReference type="PRINTS" id="PR00592">
    <property type="entry name" value="CASENSINGR"/>
</dbReference>
<dbReference type="PRINTS" id="PR00248">
    <property type="entry name" value="GPCRMGR"/>
</dbReference>
<dbReference type="SUPFAM" id="SSF53822">
    <property type="entry name" value="Periplasmic binding protein-like I"/>
    <property type="match status" value="1"/>
</dbReference>
<dbReference type="PROSITE" id="PS00979">
    <property type="entry name" value="G_PROTEIN_RECEP_F3_1"/>
    <property type="match status" value="1"/>
</dbReference>
<dbReference type="PROSITE" id="PS00980">
    <property type="entry name" value="G_PROTEIN_RECEP_F3_2"/>
    <property type="match status" value="1"/>
</dbReference>
<dbReference type="PROSITE" id="PS00981">
    <property type="entry name" value="G_PROTEIN_RECEP_F3_3"/>
    <property type="match status" value="1"/>
</dbReference>
<dbReference type="PROSITE" id="PS50259">
    <property type="entry name" value="G_PROTEIN_RECEP_F3_4"/>
    <property type="match status" value="1"/>
</dbReference>
<organism>
    <name type="scientific">Mus musculus</name>
    <name type="common">Mouse</name>
    <dbReference type="NCBI Taxonomy" id="10090"/>
    <lineage>
        <taxon>Eukaryota</taxon>
        <taxon>Metazoa</taxon>
        <taxon>Chordata</taxon>
        <taxon>Craniata</taxon>
        <taxon>Vertebrata</taxon>
        <taxon>Euteleostomi</taxon>
        <taxon>Mammalia</taxon>
        <taxon>Eutheria</taxon>
        <taxon>Euarchontoglires</taxon>
        <taxon>Glires</taxon>
        <taxon>Rodentia</taxon>
        <taxon>Myomorpha</taxon>
        <taxon>Muroidea</taxon>
        <taxon>Muridae</taxon>
        <taxon>Murinae</taxon>
        <taxon>Mus</taxon>
        <taxon>Mus</taxon>
    </lineage>
</organism>
<proteinExistence type="evidence at protein level"/>
<gene>
    <name evidence="14 16" type="primary">Casr</name>
    <name evidence="14" type="synonym">Gprc2a</name>
</gene>
<comment type="function">
    <text evidence="1 8 10 11 12">G-protein-coupled receptor that senses changes in the extracellular concentration of calcium ions and plays a key role in maintaining calcium homeostasis (PubMed:23143333). Senses fluctuations in the circulating calcium concentration: activated by elevated circulating calcium, leading to decreased parathyroid hormone (PTH) secretion in parathyroid glands (PubMed:7493018). In kidneys, acts as a key regulator of renal tubular calcium resorption (PubMed:12671051). Ligand binding causes a conformation change that triggers signaling via guanine nucleotide-binding proteins (G-proteins) and modulates the activity of downstream effectors (By similarity). CASR is coupled with different G(q)/G(11), G(i)/G(o)- or G(s)-classes of G-proteins depending on the context (PubMed:23143333). In the parathyroid and kidney, CASR signals through G(q)/G(11) and G(i)/G(o) G-proteins: G(q)/G(11) coupling activates phospholipase C-beta, releasing diacylglycerol (DAG) and inositol 1,4,5-trisphosphate (IP3) second messengers, while G(i)/G(o) coupling mediates inhibition of adenylate cyclase activity (PubMed:23143333). The G-protein-coupled receptor activity is activated by a co-agonist mechanism: aromatic amino acids, such as Trp or Phe, act concertedly with divalent cations, such as calcium or magnesium, to achieve full receptor activation (By similarity). Acts as an activator of the NLRP3 inflammasome via G(i)/G(o)-mediated signaling: down-regulation of cyclic AMP (cAMP) relieving NLRP3 inhibition by cAMP (PubMed:23143333). Acts as a regulator of proton-sensing receptor GPR68 in a seesaw manner: CASR-mediated signaling inhibits GPR68 signaling in response to extracellular calcium, while GPR68 inhibits CASR in presence of extracellular protons (PubMed:26261299).</text>
</comment>
<comment type="activity regulation">
    <text evidence="1">In resting state, adopts an open conformation, anion-binding promoting the inactive configuration. Upon aromatic amino acid-binding, the groove in the extracellular venus flytrap module is closed, thereby inducing the formation of a novel homodimer interface between subunits. Calcium ions stabilize the active state by enhancing homodimer interactions between membrane-proximal domains to fully activate the receptor. Upon activation, the homodimer adopts an asymmetric configuration of the 7-transmembrane region that primes one protomer for G-protein coupling. G-protein binding expands the transmembrane dimer interface; the restriction imposed by the receptor dimer, in combination with intracellular loop 2 (ICL2), enables G-protein activation by facilitating conformational transition of G-protein alpha. Coupling to different classes of G-proteins results in distinct CASR-G-protein interfaces.</text>
</comment>
<comment type="subunit">
    <text evidence="1 2">Homodimer; disulfide-linked. Interacts with VCP (By similarity). Interacts with ARRB1 (By similarity).</text>
</comment>
<comment type="subcellular location">
    <subcellularLocation>
        <location evidence="9">Cell membrane</location>
        <topology evidence="3">Multi-pass membrane protein</topology>
    </subcellularLocation>
</comment>
<comment type="alternative products">
    <event type="alternative splicing"/>
    <isoform>
        <id>Q9QY96-1</id>
        <name>A</name>
        <sequence type="displayed"/>
    </isoform>
    <isoform>
        <id>Q9QY96-2</id>
        <name>B</name>
        <sequence type="described" ref="VSP_002036"/>
    </isoform>
</comment>
<comment type="tissue specificity">
    <text evidence="5 6 7 13">Epidermis, kidney and cartilage.</text>
</comment>
<comment type="domain">
    <text evidence="1">The extracellular regions of the homodimer interact in a side-by-side fashion while facing opposite directions. Each extracellular region consists of three domains, LB1 (ligand-binding 1), LB2 and CR (cysteine-rich). The two lobe-shaped domains LB1 and LB2 form a venus flytrap module. In the inactive configuration, the venus flytrap modules of both protomers are in the open conformation associated with the resting state (open-open) and the interdomain cleft is empty. In addition, each protomer contains three anions, which reinforce the inactive conformation, and one calcium ion. In the active configuration, both protomers of extracellular regions have the closed conformation associated with agonist-binding (closed-closed). The ligand-binding cleft of each protomer is solely occupied by an aromatic amino-acid. Calcium is bound at four novel sites, including one at the homodimer interface. Agonist-binding induces large conformational changes within the extracellular region homodimer: first, the venus flytrap module of each protomer undergoes domain closure. Second, the LB2 regions of the two protomers approach each other, resulting in an expansion of the homodimer interactions involving LB2 domains. Third, the CR regions of the two subunits interact to form a large homodimer interface that is unique to the active state. The CR regions are brought into close contact by the motion involving LB2 since the two domains are rigidly associated within each subunit.</text>
</comment>
<comment type="domain">
    <text evidence="1">G-protein recognition is mediated by the intracellular loop 2 (ICL2) and the C-terminus, which contribute differentially towards the binding of the 2 G-protein subtypes G(q)/G(11) and G(i)/G(o), resulting in distinct CASR-G-protein interfaces. The C-terminus confers selectivity for G(q)/G(11), while it contributes less to G(i)/G(o)-coupling. The C-terminus adopts opposing orientations for G(q)/G(11) and G(i)/G(o)-coupling.</text>
</comment>
<comment type="domain">
    <text evidence="1">The arginine-rich retention motif inhibits localization to the plasma membrane, possibly by promoting interaction with 14-3-3 proteins. Phosphorylation at Ser-899 by PKA relieve inhibition and promote plasma membrane localization.</text>
</comment>
<comment type="PTM">
    <text evidence="1">Phosphorylation at Thr-888 by PKC impairs coupling with G(q)/G(11) G-proteins, while it does not affect G(i)/G(o)-coupling. Phosphorylation at Ser-899 by PKA promote plasma membrane localization.</text>
</comment>
<comment type="PTM">
    <text evidence="1">Ubiquitinated by RNF19A; which induces proteasomal degradation.</text>
</comment>
<comment type="disruption phenotype">
    <text evidence="8 12">Heterozygous mice show benign and modest elevations of serum calcium, magnesium and parathyroid hormone levels as well as hypocalciuria (PubMed:7493018). Homozygous mice show neonatal severe hyperparathyroidism, had markedly elevated serum calcium and parathyroid hormone levels, parathyroid hyperplasia, bone abnormalities, retarded growth and premature death (PubMed:7493018). Mice lacking both Casr and Pth survive to adulthood with no obvious difference in size or appearance relative to control; they however show a wider range of values for serum calcium and renal excretion of calcium (PubMed:12671051).</text>
</comment>
<comment type="similarity">
    <text evidence="15">Belongs to the G-protein coupled receptor 3 family.</text>
</comment>